<feature type="chain" id="PRO_0000263510" description="Elongation factor G 2">
    <location>
        <begin position="1"/>
        <end position="697"/>
    </location>
</feature>
<feature type="domain" description="tr-type G">
    <location>
        <begin position="5"/>
        <end position="280"/>
    </location>
</feature>
<feature type="binding site" evidence="1">
    <location>
        <begin position="14"/>
        <end position="21"/>
    </location>
    <ligand>
        <name>GTP</name>
        <dbReference type="ChEBI" id="CHEBI:37565"/>
    </ligand>
</feature>
<feature type="binding site" evidence="1">
    <location>
        <begin position="78"/>
        <end position="82"/>
    </location>
    <ligand>
        <name>GTP</name>
        <dbReference type="ChEBI" id="CHEBI:37565"/>
    </ligand>
</feature>
<feature type="binding site" evidence="1">
    <location>
        <begin position="132"/>
        <end position="135"/>
    </location>
    <ligand>
        <name>GTP</name>
        <dbReference type="ChEBI" id="CHEBI:37565"/>
    </ligand>
</feature>
<protein>
    <recommendedName>
        <fullName evidence="1">Elongation factor G 2</fullName>
        <shortName evidence="1">EF-G 2</shortName>
    </recommendedName>
</protein>
<proteinExistence type="inferred from homology"/>
<dbReference type="EMBL" id="CP000444">
    <property type="protein sequence ID" value="ABI44306.1"/>
    <property type="molecule type" value="Genomic_DNA"/>
</dbReference>
<dbReference type="SMR" id="Q0HRE9"/>
<dbReference type="KEGG" id="shm:Shewmr7_3324"/>
<dbReference type="HOGENOM" id="CLU_002794_4_1_6"/>
<dbReference type="GO" id="GO:0005737">
    <property type="term" value="C:cytoplasm"/>
    <property type="evidence" value="ECO:0007669"/>
    <property type="project" value="UniProtKB-SubCell"/>
</dbReference>
<dbReference type="GO" id="GO:0005525">
    <property type="term" value="F:GTP binding"/>
    <property type="evidence" value="ECO:0007669"/>
    <property type="project" value="UniProtKB-UniRule"/>
</dbReference>
<dbReference type="GO" id="GO:0003924">
    <property type="term" value="F:GTPase activity"/>
    <property type="evidence" value="ECO:0007669"/>
    <property type="project" value="InterPro"/>
</dbReference>
<dbReference type="GO" id="GO:0097216">
    <property type="term" value="F:guanosine tetraphosphate binding"/>
    <property type="evidence" value="ECO:0007669"/>
    <property type="project" value="UniProtKB-ARBA"/>
</dbReference>
<dbReference type="GO" id="GO:0003746">
    <property type="term" value="F:translation elongation factor activity"/>
    <property type="evidence" value="ECO:0007669"/>
    <property type="project" value="UniProtKB-UniRule"/>
</dbReference>
<dbReference type="GO" id="GO:0032790">
    <property type="term" value="P:ribosome disassembly"/>
    <property type="evidence" value="ECO:0007669"/>
    <property type="project" value="TreeGrafter"/>
</dbReference>
<dbReference type="CDD" id="cd01886">
    <property type="entry name" value="EF-G"/>
    <property type="match status" value="1"/>
</dbReference>
<dbReference type="CDD" id="cd16262">
    <property type="entry name" value="EFG_III"/>
    <property type="match status" value="1"/>
</dbReference>
<dbReference type="CDD" id="cd01434">
    <property type="entry name" value="EFG_mtEFG1_IV"/>
    <property type="match status" value="1"/>
</dbReference>
<dbReference type="CDD" id="cd03713">
    <property type="entry name" value="EFG_mtEFG_C"/>
    <property type="match status" value="1"/>
</dbReference>
<dbReference type="CDD" id="cd04088">
    <property type="entry name" value="EFG_mtEFG_II"/>
    <property type="match status" value="1"/>
</dbReference>
<dbReference type="FunFam" id="2.40.30.10:FF:000006">
    <property type="entry name" value="Elongation factor G"/>
    <property type="match status" value="1"/>
</dbReference>
<dbReference type="FunFam" id="3.30.230.10:FF:000003">
    <property type="entry name" value="Elongation factor G"/>
    <property type="match status" value="1"/>
</dbReference>
<dbReference type="FunFam" id="3.30.70.240:FF:000001">
    <property type="entry name" value="Elongation factor G"/>
    <property type="match status" value="1"/>
</dbReference>
<dbReference type="FunFam" id="3.30.70.870:FF:000006">
    <property type="entry name" value="Elongation factor G"/>
    <property type="match status" value="1"/>
</dbReference>
<dbReference type="FunFam" id="3.40.50.300:FF:000029">
    <property type="entry name" value="Elongation factor G"/>
    <property type="match status" value="1"/>
</dbReference>
<dbReference type="Gene3D" id="3.30.230.10">
    <property type="match status" value="1"/>
</dbReference>
<dbReference type="Gene3D" id="3.30.70.240">
    <property type="match status" value="1"/>
</dbReference>
<dbReference type="Gene3D" id="3.30.70.870">
    <property type="entry name" value="Elongation Factor G (Translational Gtpase), domain 3"/>
    <property type="match status" value="1"/>
</dbReference>
<dbReference type="Gene3D" id="3.40.50.300">
    <property type="entry name" value="P-loop containing nucleotide triphosphate hydrolases"/>
    <property type="match status" value="1"/>
</dbReference>
<dbReference type="Gene3D" id="2.40.30.10">
    <property type="entry name" value="Translation factors"/>
    <property type="match status" value="1"/>
</dbReference>
<dbReference type="HAMAP" id="MF_00054_B">
    <property type="entry name" value="EF_G_EF_2_B"/>
    <property type="match status" value="1"/>
</dbReference>
<dbReference type="InterPro" id="IPR041095">
    <property type="entry name" value="EFG_II"/>
</dbReference>
<dbReference type="InterPro" id="IPR009022">
    <property type="entry name" value="EFG_III"/>
</dbReference>
<dbReference type="InterPro" id="IPR035647">
    <property type="entry name" value="EFG_III/V"/>
</dbReference>
<dbReference type="InterPro" id="IPR047872">
    <property type="entry name" value="EFG_IV"/>
</dbReference>
<dbReference type="InterPro" id="IPR035649">
    <property type="entry name" value="EFG_V"/>
</dbReference>
<dbReference type="InterPro" id="IPR000640">
    <property type="entry name" value="EFG_V-like"/>
</dbReference>
<dbReference type="InterPro" id="IPR004161">
    <property type="entry name" value="EFTu-like_2"/>
</dbReference>
<dbReference type="InterPro" id="IPR031157">
    <property type="entry name" value="G_TR_CS"/>
</dbReference>
<dbReference type="InterPro" id="IPR027417">
    <property type="entry name" value="P-loop_NTPase"/>
</dbReference>
<dbReference type="InterPro" id="IPR020568">
    <property type="entry name" value="Ribosomal_Su5_D2-typ_SF"/>
</dbReference>
<dbReference type="InterPro" id="IPR014721">
    <property type="entry name" value="Ribsml_uS5_D2-typ_fold_subgr"/>
</dbReference>
<dbReference type="InterPro" id="IPR005225">
    <property type="entry name" value="Small_GTP-bd"/>
</dbReference>
<dbReference type="InterPro" id="IPR000795">
    <property type="entry name" value="T_Tr_GTP-bd_dom"/>
</dbReference>
<dbReference type="InterPro" id="IPR009000">
    <property type="entry name" value="Transl_B-barrel_sf"/>
</dbReference>
<dbReference type="InterPro" id="IPR004540">
    <property type="entry name" value="Transl_elong_EFG/EF2"/>
</dbReference>
<dbReference type="InterPro" id="IPR005517">
    <property type="entry name" value="Transl_elong_EFG/EF2_IV"/>
</dbReference>
<dbReference type="NCBIfam" id="TIGR00484">
    <property type="entry name" value="EF-G"/>
    <property type="match status" value="1"/>
</dbReference>
<dbReference type="NCBIfam" id="NF009381">
    <property type="entry name" value="PRK12740.1-5"/>
    <property type="match status" value="1"/>
</dbReference>
<dbReference type="NCBIfam" id="TIGR00231">
    <property type="entry name" value="small_GTP"/>
    <property type="match status" value="1"/>
</dbReference>
<dbReference type="PANTHER" id="PTHR43261:SF5">
    <property type="entry name" value="ELONGATION FACTOR G 1"/>
    <property type="match status" value="1"/>
</dbReference>
<dbReference type="PANTHER" id="PTHR43261">
    <property type="entry name" value="TRANSLATION ELONGATION FACTOR G-RELATED"/>
    <property type="match status" value="1"/>
</dbReference>
<dbReference type="Pfam" id="PF00679">
    <property type="entry name" value="EFG_C"/>
    <property type="match status" value="1"/>
</dbReference>
<dbReference type="Pfam" id="PF14492">
    <property type="entry name" value="EFG_III"/>
    <property type="match status" value="1"/>
</dbReference>
<dbReference type="Pfam" id="PF03764">
    <property type="entry name" value="EFG_IV"/>
    <property type="match status" value="1"/>
</dbReference>
<dbReference type="Pfam" id="PF00009">
    <property type="entry name" value="GTP_EFTU"/>
    <property type="match status" value="1"/>
</dbReference>
<dbReference type="Pfam" id="PF03144">
    <property type="entry name" value="GTP_EFTU_D2"/>
    <property type="match status" value="1"/>
</dbReference>
<dbReference type="PRINTS" id="PR00315">
    <property type="entry name" value="ELONGATNFCT"/>
</dbReference>
<dbReference type="SMART" id="SM00838">
    <property type="entry name" value="EFG_C"/>
    <property type="match status" value="1"/>
</dbReference>
<dbReference type="SMART" id="SM00889">
    <property type="entry name" value="EFG_IV"/>
    <property type="match status" value="1"/>
</dbReference>
<dbReference type="SUPFAM" id="SSF54980">
    <property type="entry name" value="EF-G C-terminal domain-like"/>
    <property type="match status" value="2"/>
</dbReference>
<dbReference type="SUPFAM" id="SSF52540">
    <property type="entry name" value="P-loop containing nucleoside triphosphate hydrolases"/>
    <property type="match status" value="1"/>
</dbReference>
<dbReference type="SUPFAM" id="SSF54211">
    <property type="entry name" value="Ribosomal protein S5 domain 2-like"/>
    <property type="match status" value="1"/>
</dbReference>
<dbReference type="SUPFAM" id="SSF50447">
    <property type="entry name" value="Translation proteins"/>
    <property type="match status" value="1"/>
</dbReference>
<dbReference type="PROSITE" id="PS00301">
    <property type="entry name" value="G_TR_1"/>
    <property type="match status" value="1"/>
</dbReference>
<dbReference type="PROSITE" id="PS51722">
    <property type="entry name" value="G_TR_2"/>
    <property type="match status" value="1"/>
</dbReference>
<evidence type="ECO:0000255" key="1">
    <source>
        <dbReference type="HAMAP-Rule" id="MF_00054"/>
    </source>
</evidence>
<comment type="function">
    <text evidence="1">Catalyzes the GTP-dependent ribosomal translocation step during translation elongation. During this step, the ribosome changes from the pre-translocational (PRE) to the post-translocational (POST) state as the newly formed A-site-bound peptidyl-tRNA and P-site-bound deacylated tRNA move to the P and E sites, respectively. Catalyzes the coordinated movement of the two tRNA molecules, the mRNA and conformational changes in the ribosome.</text>
</comment>
<comment type="subcellular location">
    <subcellularLocation>
        <location evidence="1">Cytoplasm</location>
    </subcellularLocation>
</comment>
<comment type="similarity">
    <text evidence="1">Belongs to the TRAFAC class translation factor GTPase superfamily. Classic translation factor GTPase family. EF-G/EF-2 subfamily.</text>
</comment>
<gene>
    <name evidence="1" type="primary">fusA2</name>
    <name type="ordered locus">Shewmr7_3324</name>
</gene>
<keyword id="KW-0963">Cytoplasm</keyword>
<keyword id="KW-0251">Elongation factor</keyword>
<keyword id="KW-0342">GTP-binding</keyword>
<keyword id="KW-0547">Nucleotide-binding</keyword>
<keyword id="KW-0648">Protein biosynthesis</keyword>
<reference key="1">
    <citation type="submission" date="2006-08" db="EMBL/GenBank/DDBJ databases">
        <title>Complete sequence of chromosome 1 of Shewanella sp. MR-7.</title>
        <authorList>
            <person name="Copeland A."/>
            <person name="Lucas S."/>
            <person name="Lapidus A."/>
            <person name="Barry K."/>
            <person name="Detter J.C."/>
            <person name="Glavina del Rio T."/>
            <person name="Hammon N."/>
            <person name="Israni S."/>
            <person name="Dalin E."/>
            <person name="Tice H."/>
            <person name="Pitluck S."/>
            <person name="Kiss H."/>
            <person name="Brettin T."/>
            <person name="Bruce D."/>
            <person name="Han C."/>
            <person name="Tapia R."/>
            <person name="Gilna P."/>
            <person name="Schmutz J."/>
            <person name="Larimer F."/>
            <person name="Land M."/>
            <person name="Hauser L."/>
            <person name="Kyrpides N."/>
            <person name="Mikhailova N."/>
            <person name="Nealson K."/>
            <person name="Konstantinidis K."/>
            <person name="Klappenbach J."/>
            <person name="Tiedje J."/>
            <person name="Richardson P."/>
        </authorList>
    </citation>
    <scope>NUCLEOTIDE SEQUENCE [LARGE SCALE GENOMIC DNA]</scope>
    <source>
        <strain>MR-7</strain>
    </source>
</reference>
<name>EFG2_SHESR</name>
<sequence length="697" mass="76807">MTELSKYRNIGIFAHVDAGKTTTTERILKLTGKIHKLGEVHDGESTTDFMVQEAERGITIQSAAVSCFWKDHRFNVIDTPGHVDFTVEVYRSLKVLDGGIAVFCGSGGVEPQSETNWRYANESEVARIIFVNKLDRMGADFLRVVKQTKDVLAANPLVMVLPIGIEDEFKGVVDLLTRKAYVWDDSGIPENFEVQDVPADMVDLVEEYREMLIESAVEQDDDLMEAYMEGEEPSIEDLKRCIRKGTRTMAFFPTFCGSAFKNKGMQLVLDAVVDYLPAPDEVDPQPLTDEEGNETGEYAIVSADESLKALAFKIMDDRFGALTFVRIYAGRLKKGDTILNSATGKTERIGRMCEMYANDRIEIESAEAGDIIAIVGMKNVQTGHTLCDVKHPCTLEAMVFPEPVISIAVAPKDKGGSEKMAIAIGKMIAEDPSFRVETDEDSGETILKGMGELHLDIKVDILKRTYGVELIVGEPQVAYRETITQMVEDQYTHKKQSGGSGQFGKIEYIIRPGEPNSGFVFKSSVVGGNVPKEYWPAVEKGFASMMNTGTIAGFPVLDVEFELTDGAYHAVDSSAIAFEIAAKAAFRQSIAKAKPQLLEPIMKVDVFSPEDNVGDVIGDLNRRRGMIKDQVAGVTGVRVKADVPLSEMFGYIGTLRTMTSGRGQFSMEFSHYSPCPNSVADKVVEQVKERKAAEAKK</sequence>
<accession>Q0HRE9</accession>
<organism>
    <name type="scientific">Shewanella sp. (strain MR-7)</name>
    <dbReference type="NCBI Taxonomy" id="60481"/>
    <lineage>
        <taxon>Bacteria</taxon>
        <taxon>Pseudomonadati</taxon>
        <taxon>Pseudomonadota</taxon>
        <taxon>Gammaproteobacteria</taxon>
        <taxon>Alteromonadales</taxon>
        <taxon>Shewanellaceae</taxon>
        <taxon>Shewanella</taxon>
    </lineage>
</organism>